<comment type="function">
    <text evidence="1">One of the extrinsic, lumenal subunits of photosystem II (PSII). PSII is a light-driven water plastoquinone oxidoreductase, using light energy to abstract electrons from H(2)O, generating a proton gradient subsequently used for ATP formation. The extrinsic proteins stabilize the structure of photosystem II oxygen-evolving complex (OEC), the ion environment of oxygen evolution and protect the OEC against heat-induced inactivation. Low-potential cytochrome c that plays a role in the OEC of PSII.</text>
</comment>
<comment type="cofactor">
    <cofactor evidence="1">
        <name>heme c</name>
        <dbReference type="ChEBI" id="CHEBI:61717"/>
    </cofactor>
    <text evidence="1">Binds 1 heme c group covalently per subunit.</text>
</comment>
<comment type="subunit">
    <text evidence="1">PSII is composed of 1 copy each of membrane proteins PsbA, PsbB, PsbC, PsbD, PsbE, PsbF, PsbH, PsbI, PsbJ, PsbK, PsbL, PsbM, PsbT, PsbX, PsbY, PsbZ, Psb30/Ycf12, peripheral proteins PsbO, CyanoQ (PsbQ), PsbU, PsbV and a large number of cofactors. It forms dimeric complexes.</text>
</comment>
<comment type="subcellular location">
    <subcellularLocation>
        <location evidence="1">Cellular thylakoid membrane</location>
        <topology evidence="1">Peripheral membrane protein</topology>
        <orientation evidence="1">Lumenal side</orientation>
    </subcellularLocation>
    <text evidence="1">Associated with photosystem II at the lumenal side of the thylakoid membrane.</text>
</comment>
<comment type="similarity">
    <text evidence="1">Belongs to the cytochrome c family. PsbV subfamily.</text>
</comment>
<keyword id="KW-0249">Electron transport</keyword>
<keyword id="KW-0349">Heme</keyword>
<keyword id="KW-0408">Iron</keyword>
<keyword id="KW-0472">Membrane</keyword>
<keyword id="KW-0479">Metal-binding</keyword>
<keyword id="KW-0602">Photosynthesis</keyword>
<keyword id="KW-0604">Photosystem II</keyword>
<keyword id="KW-1185">Reference proteome</keyword>
<keyword id="KW-0732">Signal</keyword>
<keyword id="KW-0793">Thylakoid</keyword>
<keyword id="KW-0813">Transport</keyword>
<sequence length="180" mass="19629">MFSKAFSFQKVFAPARRRLLVLLLAALMAGFGWGLAPVFAARDIPAVALSPTESITFTEAQLAKGKKLFNTACAQCHVGGQTYPNPDVSLKLSDLEGATPPRDNVLAIVDYIKNPVTYDGVESLLEYHPNTQLTSEYPRLRNLTDEDLKLIAGYILVQAKTVPGWGGTKNESHSDLSAYL</sequence>
<protein>
    <recommendedName>
        <fullName evidence="1">Photosystem II extrinsic protein V</fullName>
        <shortName evidence="1">PsbV</shortName>
    </recommendedName>
    <alternativeName>
        <fullName evidence="1">Cytochrome c-550</fullName>
    </alternativeName>
    <alternativeName>
        <fullName evidence="1">Cytochrome c550</fullName>
    </alternativeName>
    <alternativeName>
        <fullName evidence="1">Low-potential cytochrome c</fullName>
    </alternativeName>
</protein>
<feature type="signal peptide" evidence="1">
    <location>
        <begin position="1"/>
        <end position="40"/>
    </location>
</feature>
<feature type="chain" id="PRO_0000295604" description="Photosystem II extrinsic protein V">
    <location>
        <begin position="41"/>
        <end position="180"/>
    </location>
</feature>
<feature type="binding site" description="covalent" evidence="1">
    <location>
        <position position="73"/>
    </location>
    <ligand>
        <name>heme c</name>
        <dbReference type="ChEBI" id="CHEBI:61717"/>
    </ligand>
</feature>
<feature type="binding site" description="covalent" evidence="1">
    <location>
        <position position="76"/>
    </location>
    <ligand>
        <name>heme c</name>
        <dbReference type="ChEBI" id="CHEBI:61717"/>
    </ligand>
</feature>
<feature type="binding site" description="axial binding residue" evidence="1">
    <location>
        <position position="77"/>
    </location>
    <ligand>
        <name>heme c</name>
        <dbReference type="ChEBI" id="CHEBI:61717"/>
    </ligand>
    <ligandPart>
        <name>Fe</name>
        <dbReference type="ChEBI" id="CHEBI:18248"/>
    </ligandPart>
</feature>
<feature type="binding site" description="axial binding residue" evidence="1">
    <location>
        <position position="128"/>
    </location>
    <ligand>
        <name>heme c</name>
        <dbReference type="ChEBI" id="CHEBI:61717"/>
    </ligand>
    <ligandPart>
        <name>Fe</name>
        <dbReference type="ChEBI" id="CHEBI:18248"/>
    </ligandPart>
</feature>
<proteinExistence type="inferred from homology"/>
<accession>Q2JIS8</accession>
<gene>
    <name evidence="1" type="primary">psbV</name>
    <name type="ordered locus">CYB_2537</name>
</gene>
<organism>
    <name type="scientific">Synechococcus sp. (strain JA-2-3B'a(2-13))</name>
    <name type="common">Cyanobacteria bacterium Yellowstone B-Prime</name>
    <dbReference type="NCBI Taxonomy" id="321332"/>
    <lineage>
        <taxon>Bacteria</taxon>
        <taxon>Bacillati</taxon>
        <taxon>Cyanobacteriota</taxon>
        <taxon>Cyanophyceae</taxon>
        <taxon>Synechococcales</taxon>
        <taxon>Synechococcaceae</taxon>
        <taxon>Synechococcus</taxon>
    </lineage>
</organism>
<dbReference type="EMBL" id="CP000240">
    <property type="protein sequence ID" value="ABD03470.1"/>
    <property type="molecule type" value="Genomic_DNA"/>
</dbReference>
<dbReference type="RefSeq" id="WP_011434097.1">
    <property type="nucleotide sequence ID" value="NC_007776.1"/>
</dbReference>
<dbReference type="SMR" id="Q2JIS8"/>
<dbReference type="STRING" id="321332.CYB_2537"/>
<dbReference type="KEGG" id="cyb:CYB_2537"/>
<dbReference type="eggNOG" id="COG2010">
    <property type="taxonomic scope" value="Bacteria"/>
</dbReference>
<dbReference type="HOGENOM" id="CLU_104149_1_0_3"/>
<dbReference type="OrthoDB" id="486949at2"/>
<dbReference type="Proteomes" id="UP000001938">
    <property type="component" value="Chromosome"/>
</dbReference>
<dbReference type="GO" id="GO:0009523">
    <property type="term" value="C:photosystem II"/>
    <property type="evidence" value="ECO:0007669"/>
    <property type="project" value="UniProtKB-KW"/>
</dbReference>
<dbReference type="GO" id="GO:0031676">
    <property type="term" value="C:plasma membrane-derived thylakoid membrane"/>
    <property type="evidence" value="ECO:0007669"/>
    <property type="project" value="UniProtKB-SubCell"/>
</dbReference>
<dbReference type="GO" id="GO:0009055">
    <property type="term" value="F:electron transfer activity"/>
    <property type="evidence" value="ECO:0007669"/>
    <property type="project" value="InterPro"/>
</dbReference>
<dbReference type="GO" id="GO:0020037">
    <property type="term" value="F:heme binding"/>
    <property type="evidence" value="ECO:0007669"/>
    <property type="project" value="InterPro"/>
</dbReference>
<dbReference type="GO" id="GO:0046872">
    <property type="term" value="F:metal ion binding"/>
    <property type="evidence" value="ECO:0007669"/>
    <property type="project" value="UniProtKB-KW"/>
</dbReference>
<dbReference type="GO" id="GO:0019684">
    <property type="term" value="P:photosynthesis, light reaction"/>
    <property type="evidence" value="ECO:0007669"/>
    <property type="project" value="UniProtKB-UniRule"/>
</dbReference>
<dbReference type="Gene3D" id="1.10.760.10">
    <property type="entry name" value="Cytochrome c-like domain"/>
    <property type="match status" value="1"/>
</dbReference>
<dbReference type="HAMAP" id="MF_01378">
    <property type="entry name" value="PSII_Cyt550"/>
    <property type="match status" value="1"/>
</dbReference>
<dbReference type="InterPro" id="IPR009056">
    <property type="entry name" value="Cyt_c-like_dom"/>
</dbReference>
<dbReference type="InterPro" id="IPR036909">
    <property type="entry name" value="Cyt_c-like_dom_sf"/>
</dbReference>
<dbReference type="InterPro" id="IPR029490">
    <property type="entry name" value="Cytochrom_C550"/>
</dbReference>
<dbReference type="InterPro" id="IPR017851">
    <property type="entry name" value="PsbV_cyt_c550"/>
</dbReference>
<dbReference type="NCBIfam" id="TIGR03045">
    <property type="entry name" value="PS_II_C550"/>
    <property type="match status" value="1"/>
</dbReference>
<dbReference type="Pfam" id="PF14495">
    <property type="entry name" value="Cytochrom_C550"/>
    <property type="match status" value="1"/>
</dbReference>
<dbReference type="SUPFAM" id="SSF46626">
    <property type="entry name" value="Cytochrome c"/>
    <property type="match status" value="1"/>
</dbReference>
<dbReference type="PROSITE" id="PS51007">
    <property type="entry name" value="CYTC"/>
    <property type="match status" value="1"/>
</dbReference>
<reference key="1">
    <citation type="journal article" date="2007" name="ISME J.">
        <title>Population level functional diversity in a microbial community revealed by comparative genomic and metagenomic analyses.</title>
        <authorList>
            <person name="Bhaya D."/>
            <person name="Grossman A.R."/>
            <person name="Steunou A.-S."/>
            <person name="Khuri N."/>
            <person name="Cohan F.M."/>
            <person name="Hamamura N."/>
            <person name="Melendrez M.C."/>
            <person name="Bateson M.M."/>
            <person name="Ward D.M."/>
            <person name="Heidelberg J.F."/>
        </authorList>
    </citation>
    <scope>NUCLEOTIDE SEQUENCE [LARGE SCALE GENOMIC DNA]</scope>
    <source>
        <strain>JA-2-3B'a(2-13)</strain>
    </source>
</reference>
<evidence type="ECO:0000255" key="1">
    <source>
        <dbReference type="HAMAP-Rule" id="MF_01378"/>
    </source>
</evidence>
<name>CY550_SYNJB</name>